<accession>Q291E4</accession>
<gene>
    <name type="primary">vir</name>
    <name type="ORF">GA17481</name>
</gene>
<feature type="chain" id="PRO_0000308608" description="Protein virilizer">
    <location>
        <begin position="1"/>
        <end position="1849"/>
    </location>
</feature>
<feature type="region of interest" description="Disordered" evidence="2">
    <location>
        <begin position="206"/>
        <end position="364"/>
    </location>
</feature>
<feature type="region of interest" description="Disordered" evidence="2">
    <location>
        <begin position="783"/>
        <end position="818"/>
    </location>
</feature>
<feature type="region of interest" description="Disordered" evidence="2">
    <location>
        <begin position="1557"/>
        <end position="1584"/>
    </location>
</feature>
<feature type="region of interest" description="Disordered" evidence="2">
    <location>
        <begin position="1666"/>
        <end position="1686"/>
    </location>
</feature>
<feature type="region of interest" description="Disordered" evidence="2">
    <location>
        <begin position="1715"/>
        <end position="1782"/>
    </location>
</feature>
<feature type="region of interest" description="Disordered" evidence="2">
    <location>
        <begin position="1798"/>
        <end position="1849"/>
    </location>
</feature>
<feature type="compositionally biased region" description="Basic and acidic residues" evidence="2">
    <location>
        <begin position="206"/>
        <end position="219"/>
    </location>
</feature>
<feature type="compositionally biased region" description="Basic and acidic residues" evidence="2">
    <location>
        <begin position="242"/>
        <end position="265"/>
    </location>
</feature>
<feature type="compositionally biased region" description="Basic and acidic residues" evidence="2">
    <location>
        <begin position="281"/>
        <end position="291"/>
    </location>
</feature>
<feature type="compositionally biased region" description="Basic and acidic residues" evidence="2">
    <location>
        <begin position="332"/>
        <end position="347"/>
    </location>
</feature>
<feature type="compositionally biased region" description="Basic and acidic residues" evidence="2">
    <location>
        <begin position="785"/>
        <end position="818"/>
    </location>
</feature>
<feature type="compositionally biased region" description="Polar residues" evidence="2">
    <location>
        <begin position="1671"/>
        <end position="1684"/>
    </location>
</feature>
<feature type="compositionally biased region" description="Low complexity" evidence="2">
    <location>
        <begin position="1732"/>
        <end position="1742"/>
    </location>
</feature>
<feature type="compositionally biased region" description="Polar residues" evidence="2">
    <location>
        <begin position="1800"/>
        <end position="1818"/>
    </location>
</feature>
<keyword id="KW-0217">Developmental protein</keyword>
<keyword id="KW-0221">Differentiation</keyword>
<keyword id="KW-0507">mRNA processing</keyword>
<keyword id="KW-0508">mRNA splicing</keyword>
<keyword id="KW-0539">Nucleus</keyword>
<keyword id="KW-1185">Reference proteome</keyword>
<keyword id="KW-0726">Sexual differentiation</keyword>
<comment type="function">
    <text evidence="1">Associated component of the WMM complex, a complex that mediates N6-methyladenosine (m6A) methylation of mRNAs, a modification that plays a role in the efficiency of mRNA splicing and is required for sex determination. Required for sex determination and dosage compensation via Sxl alternative splicing: m6A methylation acts as a key regulator of Sxl pre-mRNA and promotes female-specific alternative splicing of Sxl, which determines female physiognomy. M6A methylation is also required for neuronal functions. Required for proper inclusion of regulated exons in Ubx transcripts, leading to isoforms Ia/b and IIa/b.</text>
</comment>
<comment type="subunit">
    <text evidence="1">Component of the WMM complex, a N6-methyltransferase complex composed of a catalytic subcomplex, named MAC, and of an associated subcomplex, named MACOM. The MAC subcomplex is composed of Ime4/Mettl3 and Mettl14. The MACOM subcomplex is composed of fl(2)d, Flacc/Xio, Hakai, vir, and, in some cases of nito. Part of a complex containing fl(2)d, Sxl and vir.</text>
</comment>
<comment type="subcellular location">
    <subcellularLocation>
        <location evidence="1">Nucleus</location>
    </subcellularLocation>
</comment>
<comment type="similarity">
    <text evidence="3">Belongs to the vir family.</text>
</comment>
<protein>
    <recommendedName>
        <fullName evidence="3">Protein virilizer</fullName>
    </recommendedName>
</protein>
<reference key="1">
    <citation type="journal article" date="2005" name="Genome Res.">
        <title>Comparative genome sequencing of Drosophila pseudoobscura: chromosomal, gene, and cis-element evolution.</title>
        <authorList>
            <person name="Richards S."/>
            <person name="Liu Y."/>
            <person name="Bettencourt B.R."/>
            <person name="Hradecky P."/>
            <person name="Letovsky S."/>
            <person name="Nielsen R."/>
            <person name="Thornton K."/>
            <person name="Hubisz M.J."/>
            <person name="Chen R."/>
            <person name="Meisel R.P."/>
            <person name="Couronne O."/>
            <person name="Hua S."/>
            <person name="Smith M.A."/>
            <person name="Zhang P."/>
            <person name="Liu J."/>
            <person name="Bussemaker H.J."/>
            <person name="van Batenburg M.F."/>
            <person name="Howells S.L."/>
            <person name="Scherer S.E."/>
            <person name="Sodergren E."/>
            <person name="Matthews B.B."/>
            <person name="Crosby M.A."/>
            <person name="Schroeder A.J."/>
            <person name="Ortiz-Barrientos D."/>
            <person name="Rives C.M."/>
            <person name="Metzker M.L."/>
            <person name="Muzny D.M."/>
            <person name="Scott G."/>
            <person name="Steffen D."/>
            <person name="Wheeler D.A."/>
            <person name="Worley K.C."/>
            <person name="Havlak P."/>
            <person name="Durbin K.J."/>
            <person name="Egan A."/>
            <person name="Gill R."/>
            <person name="Hume J."/>
            <person name="Morgan M.B."/>
            <person name="Miner G."/>
            <person name="Hamilton C."/>
            <person name="Huang Y."/>
            <person name="Waldron L."/>
            <person name="Verduzco D."/>
            <person name="Clerc-Blankenburg K.P."/>
            <person name="Dubchak I."/>
            <person name="Noor M.A.F."/>
            <person name="Anderson W."/>
            <person name="White K.P."/>
            <person name="Clark A.G."/>
            <person name="Schaeffer S.W."/>
            <person name="Gelbart W.M."/>
            <person name="Weinstock G.M."/>
            <person name="Gibbs R.A."/>
        </authorList>
    </citation>
    <scope>NUCLEOTIDE SEQUENCE [LARGE SCALE GENOMIC DNA]</scope>
    <source>
        <strain>MV2-25 / Tucson 14011-0121.94</strain>
    </source>
</reference>
<sequence length="1849" mass="208677">MTEVDDGAELLFFDTFSHEDITDINLDLVQFPKPVFITQVRIIPLGARVQADFPGGVRLGATNPSKFDLEFFVNDLGMPGASAFENLGLLRYNQNDCIHLDCSREKIPTDGLVLRGWYSTITLAVYGILTNSVTQPIASPTLPCEPAGPEMCNLSTEAHNVLLQEEVLKDDWAEPIPTELLVPHKAVVVSDYEHDDIEYGLSREHQHYHQHVDEEQREMRRLRRSTHSTDRSPPPPPMRTHTHSESNEREYIRCSRDKGSRDWSRSPEYSSHRSRRKRSDRSRSDADEHKWPRTPPASIDSPIRPRSPDAMDYDDDDSRSHYKMQASRGYRHSSESLHRDRDDEERSGTPQEQFEPILSDDEIIGDDEEDEAEDVAAAAEYERELEFAAAVAPPAIDAFEPWQRPLLVYEGDLAAHLNKELETLRLLFKKLSLQTRCESVTAFSDEHGLSADEREQFVYLGEQLNNQLGYLSQHYKRRNFVLQQFFSHDDAHLRQAANVLQVALSFQAACMQPQPAFKIRHIKLGARMAELLGSNEQLFGHLLQEQDFDLFEAVLSLYKEPYMALSIKLQLLKAVYAMLDTRLGVQNFLSPKTNGYQMVMDFLKTAKLTRTKYALQAIIKKLHLYEALASVQQCCRQIFLDTDASVPETTPDPNRLDVCQKIEFAFQMLMDALTDSQLSYQQPRRFLPVSKKFEVLTDPTAQRSFGNALQSYFVQHSLAEALLVILSNPKEVPASTFLCTLDLMHTLLRSHVGIDYFVDDAFPVTQMIVSILLGLEEVPSQPRVVEAKPEGKEDKPMDDSVEQKPDEGKAAGIRAAEEPKMAPPPVVRKPILRPVLPRLARLGIELSYKVQTRYHLDAITFTAACPEYDTIKIATHMHSIYSQTCDPSGRQHTIEVLGLNNNLKIFMDLIKKEQRLQTQRQLLSSPGTKYKSPVLSYAVDMVDACVRYCEQLDYLIEHGGVILELAKNHETFEPSVSAVLQEMYVYMKPLEAINVFVYDDIMPLVEVIGRSLDYLTTFPGDLIMALRILRFLAISKPRQKSHGTEELKHRFVALQLYAADGVQLLLQIMERLCTHFEQPGIHAPALMTIQGVHCCQIMLPTLQILRELLSYAILCRDGTYKDLTAIDHLVKVYYLLYYYPSRCQAGAEVEQCKLEVVKSLLAYTQPHEQDAESLHKSLWTLMVREVLKNIDGPAHFIPGLKLLAELLPLPLPMPQPLCDQLKQQHKQRLIIERKLWSAHLHPQSGQIAKLVEALAPSSFPQLAELLQRVCMQLSDLAPNMTLLIAKTITELLCTEYQTSNCIPTTNLERLLRFSTRLCAFAPLKSSMLSILSGKFWELFQSLLALNEFNEVVTNCQEAVHRILDSFLDSGISLISHKSTAQPALNLSAALPPKELIPRIIDAVFSNLTSVEVTHGISILAVRNLVILTEHDFTFYHLAQLLKQKLTEFQAWMERVILHNETVEYHANIESLILLLRSLTQIEPPPPMCAMPNRTLKLGAMELAQLVEFQDIDMARPPVLARILRVLEKYKLLANEAALCDLKQLIVLHASRQEAMGSASMETPAVETENDGANPAASCSTSSSGGSLNVEPFLPQAEGIVTQYDARPIFTRYCATAENPQLTARYWLEPLPIELIEDMNEPLYERIACDLTDLANVCLNPDLATSGESKRTLNLSGSPQSNREMTPTAPCFRTRRVEVEPATGRPEKKMFLSSVRGRGFARPPPSRGDLFRSRPPNTSRPPSLHVDDFLALETCGAQPTGPTGYNKIPSMLRGSRVGRNRGSRISAAAAFRQKKMMRIGSPSSWTESGGGSYRSTSESHFGGSDSHYSSPHYSGRSRGRGLRSRPPYLR</sequence>
<evidence type="ECO:0000250" key="1">
    <source>
        <dbReference type="UniProtKB" id="Q9W1R5"/>
    </source>
</evidence>
<evidence type="ECO:0000256" key="2">
    <source>
        <dbReference type="SAM" id="MobiDB-lite"/>
    </source>
</evidence>
<evidence type="ECO:0000305" key="3"/>
<name>VIR_DROPS</name>
<proteinExistence type="inferred from homology"/>
<dbReference type="EMBL" id="CM000071">
    <property type="protein sequence ID" value="EAL25168.1"/>
    <property type="molecule type" value="Genomic_DNA"/>
</dbReference>
<dbReference type="RefSeq" id="XP_001360593.1">
    <property type="nucleotide sequence ID" value="XM_001360556.3"/>
</dbReference>
<dbReference type="SMR" id="Q291E4"/>
<dbReference type="FunCoup" id="Q291E4">
    <property type="interactions" value="2627"/>
</dbReference>
<dbReference type="STRING" id="46245.Q291E4"/>
<dbReference type="EnsemblMetazoa" id="FBtr0278367">
    <property type="protein sequence ID" value="FBpp0276805"/>
    <property type="gene ID" value="FBgn0077492"/>
</dbReference>
<dbReference type="GeneID" id="4803955"/>
<dbReference type="KEGG" id="dpo:4803955"/>
<dbReference type="CTD" id="47869"/>
<dbReference type="eggNOG" id="KOG4822">
    <property type="taxonomic scope" value="Eukaryota"/>
</dbReference>
<dbReference type="HOGENOM" id="CLU_002368_0_0_1"/>
<dbReference type="InParanoid" id="Q291E4"/>
<dbReference type="OMA" id="YWLEPLP"/>
<dbReference type="PhylomeDB" id="Q291E4"/>
<dbReference type="Proteomes" id="UP000001819">
    <property type="component" value="Chromosome 3"/>
</dbReference>
<dbReference type="Bgee" id="FBgn0077492">
    <property type="expression patterns" value="Expressed in female reproductive system and 3 other cell types or tissues"/>
</dbReference>
<dbReference type="GO" id="GO:0005634">
    <property type="term" value="C:nucleus"/>
    <property type="evidence" value="ECO:0000250"/>
    <property type="project" value="UniProtKB"/>
</dbReference>
<dbReference type="GO" id="GO:0036396">
    <property type="term" value="C:RNA N6-methyladenosine methyltransferase complex"/>
    <property type="evidence" value="ECO:0007669"/>
    <property type="project" value="TreeGrafter"/>
</dbReference>
<dbReference type="GO" id="GO:0003723">
    <property type="term" value="F:RNA binding"/>
    <property type="evidence" value="ECO:0007669"/>
    <property type="project" value="TreeGrafter"/>
</dbReference>
<dbReference type="GO" id="GO:0030154">
    <property type="term" value="P:cell differentiation"/>
    <property type="evidence" value="ECO:0007669"/>
    <property type="project" value="UniProtKB-KW"/>
</dbReference>
<dbReference type="GO" id="GO:0006397">
    <property type="term" value="P:mRNA processing"/>
    <property type="evidence" value="ECO:0007669"/>
    <property type="project" value="UniProtKB-KW"/>
</dbReference>
<dbReference type="GO" id="GO:0007539">
    <property type="term" value="P:primary sex determination, soma"/>
    <property type="evidence" value="ECO:0000250"/>
    <property type="project" value="UniProtKB"/>
</dbReference>
<dbReference type="GO" id="GO:0000381">
    <property type="term" value="P:regulation of alternative mRNA splicing, via spliceosome"/>
    <property type="evidence" value="ECO:0000250"/>
    <property type="project" value="UniProtKB"/>
</dbReference>
<dbReference type="GO" id="GO:0000375">
    <property type="term" value="P:RNA splicing, via transesterification reactions"/>
    <property type="evidence" value="ECO:0000250"/>
    <property type="project" value="UniProtKB"/>
</dbReference>
<dbReference type="GO" id="GO:0007548">
    <property type="term" value="P:sex differentiation"/>
    <property type="evidence" value="ECO:0007669"/>
    <property type="project" value="UniProtKB-KW"/>
</dbReference>
<dbReference type="InterPro" id="IPR031801">
    <property type="entry name" value="VIR_N"/>
</dbReference>
<dbReference type="InterPro" id="IPR026736">
    <property type="entry name" value="Virilizer"/>
</dbReference>
<dbReference type="PANTHER" id="PTHR23185">
    <property type="entry name" value="PROTEIN VIRILIZER HOMOLOG"/>
    <property type="match status" value="1"/>
</dbReference>
<dbReference type="PANTHER" id="PTHR23185:SF0">
    <property type="entry name" value="PROTEIN VIRILIZER HOMOLOG"/>
    <property type="match status" value="1"/>
</dbReference>
<dbReference type="Pfam" id="PF15912">
    <property type="entry name" value="VIR_N"/>
    <property type="match status" value="1"/>
</dbReference>
<organism>
    <name type="scientific">Drosophila pseudoobscura pseudoobscura</name>
    <name type="common">Fruit fly</name>
    <dbReference type="NCBI Taxonomy" id="46245"/>
    <lineage>
        <taxon>Eukaryota</taxon>
        <taxon>Metazoa</taxon>
        <taxon>Ecdysozoa</taxon>
        <taxon>Arthropoda</taxon>
        <taxon>Hexapoda</taxon>
        <taxon>Insecta</taxon>
        <taxon>Pterygota</taxon>
        <taxon>Neoptera</taxon>
        <taxon>Endopterygota</taxon>
        <taxon>Diptera</taxon>
        <taxon>Brachycera</taxon>
        <taxon>Muscomorpha</taxon>
        <taxon>Ephydroidea</taxon>
        <taxon>Drosophilidae</taxon>
        <taxon>Drosophila</taxon>
        <taxon>Sophophora</taxon>
    </lineage>
</organism>